<accession>P93371</accession>
<feature type="chain" id="PRO_0000089041" description="Actin-93">
    <location>
        <begin position="1" status="less than"/>
        <end position="336" status="greater than"/>
    </location>
</feature>
<feature type="non-terminal residue">
    <location>
        <position position="1"/>
    </location>
</feature>
<feature type="non-terminal residue">
    <location>
        <position position="336"/>
    </location>
</feature>
<comment type="function">
    <text>Actins are highly conserved proteins that are involved in various types of cell motility and are ubiquitously expressed in all eukaryotic cells. Essential component of cell cytoskeleton; plays an important role in cytoplasmic streaming, cell shape determination, cell division, organelle movement and extension growth.</text>
</comment>
<comment type="catalytic activity">
    <reaction evidence="1">
        <text>ATP + H2O = ADP + phosphate + H(+)</text>
        <dbReference type="Rhea" id="RHEA:13065"/>
        <dbReference type="ChEBI" id="CHEBI:15377"/>
        <dbReference type="ChEBI" id="CHEBI:15378"/>
        <dbReference type="ChEBI" id="CHEBI:30616"/>
        <dbReference type="ChEBI" id="CHEBI:43474"/>
        <dbReference type="ChEBI" id="CHEBI:456216"/>
    </reaction>
</comment>
<comment type="subcellular location">
    <subcellularLocation>
        <location>Cytoplasm</location>
        <location>Cytoskeleton</location>
    </subcellularLocation>
</comment>
<comment type="miscellaneous">
    <text>There are at least 7 different actin genes in tobacco.</text>
</comment>
<comment type="similarity">
    <text evidence="2">Belongs to the actin family.</text>
</comment>
<organism>
    <name type="scientific">Nicotiana tabacum</name>
    <name type="common">Common tobacco</name>
    <dbReference type="NCBI Taxonomy" id="4097"/>
    <lineage>
        <taxon>Eukaryota</taxon>
        <taxon>Viridiplantae</taxon>
        <taxon>Streptophyta</taxon>
        <taxon>Embryophyta</taxon>
        <taxon>Tracheophyta</taxon>
        <taxon>Spermatophyta</taxon>
        <taxon>Magnoliopsida</taxon>
        <taxon>eudicotyledons</taxon>
        <taxon>Gunneridae</taxon>
        <taxon>Pentapetalae</taxon>
        <taxon>asterids</taxon>
        <taxon>lamiids</taxon>
        <taxon>Solanales</taxon>
        <taxon>Solanaceae</taxon>
        <taxon>Nicotianoideae</taxon>
        <taxon>Nicotianeae</taxon>
        <taxon>Nicotiana</taxon>
    </lineage>
</organism>
<proteinExistence type="inferred from homology"/>
<keyword id="KW-0067">ATP-binding</keyword>
<keyword id="KW-0963">Cytoplasm</keyword>
<keyword id="KW-0206">Cytoskeleton</keyword>
<keyword id="KW-0378">Hydrolase</keyword>
<keyword id="KW-0547">Nucleotide-binding</keyword>
<keyword id="KW-1185">Reference proteome</keyword>
<dbReference type="EC" id="3.6.4.-" evidence="1"/>
<dbReference type="EMBL" id="U60489">
    <property type="protein sequence ID" value="AAB40086.1"/>
    <property type="molecule type" value="Genomic_DNA"/>
</dbReference>
<dbReference type="SMR" id="P93371"/>
<dbReference type="STRING" id="4097.P93371"/>
<dbReference type="PaxDb" id="4097-P93371"/>
<dbReference type="Proteomes" id="UP000084051">
    <property type="component" value="Unplaced"/>
</dbReference>
<dbReference type="GO" id="GO:0015629">
    <property type="term" value="C:actin cytoskeleton"/>
    <property type="evidence" value="ECO:0000318"/>
    <property type="project" value="GO_Central"/>
</dbReference>
<dbReference type="GO" id="GO:0005737">
    <property type="term" value="C:cytoplasm"/>
    <property type="evidence" value="ECO:0007669"/>
    <property type="project" value="UniProtKB-KW"/>
</dbReference>
<dbReference type="GO" id="GO:0005524">
    <property type="term" value="F:ATP binding"/>
    <property type="evidence" value="ECO:0007669"/>
    <property type="project" value="UniProtKB-KW"/>
</dbReference>
<dbReference type="GO" id="GO:0016787">
    <property type="term" value="F:hydrolase activity"/>
    <property type="evidence" value="ECO:0007669"/>
    <property type="project" value="UniProtKB-KW"/>
</dbReference>
<dbReference type="CDD" id="cd10224">
    <property type="entry name" value="ASKHA_NBD_actin"/>
    <property type="match status" value="1"/>
</dbReference>
<dbReference type="FunFam" id="3.30.420.40:FF:000291">
    <property type="entry name" value="Actin, alpha skeletal muscle"/>
    <property type="match status" value="1"/>
</dbReference>
<dbReference type="FunFam" id="3.90.640.10:FF:000001">
    <property type="entry name" value="Actin, muscle"/>
    <property type="match status" value="1"/>
</dbReference>
<dbReference type="FunFam" id="3.30.420.40:FF:000404">
    <property type="entry name" value="Major actin"/>
    <property type="match status" value="1"/>
</dbReference>
<dbReference type="Gene3D" id="3.30.420.40">
    <property type="match status" value="2"/>
</dbReference>
<dbReference type="Gene3D" id="3.90.640.10">
    <property type="entry name" value="Actin, Chain A, domain 4"/>
    <property type="match status" value="1"/>
</dbReference>
<dbReference type="InterPro" id="IPR004000">
    <property type="entry name" value="Actin"/>
</dbReference>
<dbReference type="InterPro" id="IPR020902">
    <property type="entry name" value="Actin/actin-like_CS"/>
</dbReference>
<dbReference type="InterPro" id="IPR004001">
    <property type="entry name" value="Actin_CS"/>
</dbReference>
<dbReference type="InterPro" id="IPR043129">
    <property type="entry name" value="ATPase_NBD"/>
</dbReference>
<dbReference type="PANTHER" id="PTHR11937">
    <property type="entry name" value="ACTIN"/>
    <property type="match status" value="1"/>
</dbReference>
<dbReference type="Pfam" id="PF00022">
    <property type="entry name" value="Actin"/>
    <property type="match status" value="1"/>
</dbReference>
<dbReference type="PRINTS" id="PR00190">
    <property type="entry name" value="ACTIN"/>
</dbReference>
<dbReference type="SMART" id="SM00268">
    <property type="entry name" value="ACTIN"/>
    <property type="match status" value="1"/>
</dbReference>
<dbReference type="SUPFAM" id="SSF53067">
    <property type="entry name" value="Actin-like ATPase domain"/>
    <property type="match status" value="2"/>
</dbReference>
<dbReference type="PROSITE" id="PS00406">
    <property type="entry name" value="ACTINS_1"/>
    <property type="match status" value="1"/>
</dbReference>
<dbReference type="PROSITE" id="PS01132">
    <property type="entry name" value="ACTINS_ACT_LIKE"/>
    <property type="match status" value="1"/>
</dbReference>
<name>ACT5_TOBAC</name>
<evidence type="ECO:0000250" key="1">
    <source>
        <dbReference type="UniProtKB" id="P68137"/>
    </source>
</evidence>
<evidence type="ECO:0000305" key="2"/>
<sequence>AGFAGDDAPRAVFPSIVGRPRRTGVMVGMGQKDAYVGDEAQSKRGILTLKYPIEHGIVSNWDDMKKIWHHTFYNELRVAPEEHPVLLTEAPPNPKANREKMTQIMFETFNAPAMYVAIQAVLSLYASGRTTGIVLDSGDGVSHTVPIYEGYALPHAILRLDLAGRDLTDHLMKILTERGYSFTTTAEREIVRDVKEKLAYIALDYEQELETAKTSSSMEKSYELPDGQVITIGAERFRCPEVLFQPSMIGMEAAGIHETTYNSIMKCDVDIRKDLYGNIVLSGGTTMFPGIADRMSKEITALAPSSMKIKVVAPPERKYSVWIGGSILASLSTFQQ</sequence>
<reference key="1">
    <citation type="journal article" date="1996" name="Mol. Biol. Evol.">
        <title>Phylogeny and substitution rates of angiosperm actin genes.</title>
        <authorList>
            <person name="Moniz de Sa M."/>
            <person name="Drouin G."/>
        </authorList>
    </citation>
    <scope>NUCLEOTIDE SEQUENCE [GENOMIC DNA]</scope>
</reference>
<protein>
    <recommendedName>
        <fullName>Actin-93</fullName>
        <ecNumber evidence="1">3.6.4.-</ecNumber>
    </recommendedName>
</protein>